<comment type="function">
    <text evidence="1">Protease subunit of a proteasome-like degradation complex believed to be a general protein degrading machinery.</text>
</comment>
<comment type="catalytic activity">
    <reaction evidence="1">
        <text>ATP-dependent cleavage of peptide bonds with broad specificity.</text>
        <dbReference type="EC" id="3.4.25.2"/>
    </reaction>
</comment>
<comment type="activity regulation">
    <text evidence="1">Allosterically activated by HslU binding.</text>
</comment>
<comment type="subunit">
    <text evidence="1">A double ring-shaped homohexamer of HslV is capped on each side by a ring-shaped HslU homohexamer. The assembly of the HslU/HslV complex is dependent on binding of ATP.</text>
</comment>
<comment type="subcellular location">
    <subcellularLocation>
        <location evidence="1">Cytoplasm</location>
    </subcellularLocation>
</comment>
<comment type="similarity">
    <text evidence="1">Belongs to the peptidase T1B family. HslV subfamily.</text>
</comment>
<name>HSLV_TREDE</name>
<feature type="chain" id="PRO_0000148156" description="ATP-dependent protease subunit HslV">
    <location>
        <begin position="1"/>
        <end position="178"/>
    </location>
</feature>
<feature type="active site" evidence="1">
    <location>
        <position position="8"/>
    </location>
</feature>
<feature type="binding site" evidence="1">
    <location>
        <position position="163"/>
    </location>
    <ligand>
        <name>Na(+)</name>
        <dbReference type="ChEBI" id="CHEBI:29101"/>
    </ligand>
</feature>
<feature type="binding site" evidence="1">
    <location>
        <position position="166"/>
    </location>
    <ligand>
        <name>Na(+)</name>
        <dbReference type="ChEBI" id="CHEBI:29101"/>
    </ligand>
</feature>
<feature type="binding site" evidence="1">
    <location>
        <position position="169"/>
    </location>
    <ligand>
        <name>Na(+)</name>
        <dbReference type="ChEBI" id="CHEBI:29101"/>
    </ligand>
</feature>
<gene>
    <name evidence="1" type="primary">hslV</name>
    <name type="ordered locus">TDE_1210</name>
</gene>
<sequence>MSQKIRSTTVIAVRKDGKIVMAGDGQVTMGETVMKGNARKVRKIYDGKIITGFAGATADAFTLLEKFEIRVKEFSGDLTRAAVELAKDWRTDKMLKNLQALLLVADSKTTLLISGNGDVIEPEEDVLAIGSGGNYAYASALALMQNTNLSAREIAEKSLQIAGKICIYTNGKIITEEI</sequence>
<organism>
    <name type="scientific">Treponema denticola (strain ATCC 35405 / DSM 14222 / CIP 103919 / JCM 8153 / KCTC 15104)</name>
    <dbReference type="NCBI Taxonomy" id="243275"/>
    <lineage>
        <taxon>Bacteria</taxon>
        <taxon>Pseudomonadati</taxon>
        <taxon>Spirochaetota</taxon>
        <taxon>Spirochaetia</taxon>
        <taxon>Spirochaetales</taxon>
        <taxon>Treponemataceae</taxon>
        <taxon>Treponema</taxon>
    </lineage>
</organism>
<evidence type="ECO:0000255" key="1">
    <source>
        <dbReference type="HAMAP-Rule" id="MF_00248"/>
    </source>
</evidence>
<dbReference type="EC" id="3.4.25.2" evidence="1"/>
<dbReference type="EMBL" id="AE017226">
    <property type="protein sequence ID" value="AAS11728.1"/>
    <property type="molecule type" value="Genomic_DNA"/>
</dbReference>
<dbReference type="RefSeq" id="NP_971817.1">
    <property type="nucleotide sequence ID" value="NC_002967.9"/>
</dbReference>
<dbReference type="RefSeq" id="WP_002668456.1">
    <property type="nucleotide sequence ID" value="NC_002967.9"/>
</dbReference>
<dbReference type="SMR" id="P61478"/>
<dbReference type="STRING" id="243275.TDE_1210"/>
<dbReference type="MEROPS" id="T01.006"/>
<dbReference type="PaxDb" id="243275-TDE_1210"/>
<dbReference type="GeneID" id="2740104"/>
<dbReference type="KEGG" id="tde:TDE_1210"/>
<dbReference type="PATRIC" id="fig|243275.7.peg.1165"/>
<dbReference type="eggNOG" id="COG5405">
    <property type="taxonomic scope" value="Bacteria"/>
</dbReference>
<dbReference type="HOGENOM" id="CLU_093872_1_0_12"/>
<dbReference type="OrthoDB" id="9804884at2"/>
<dbReference type="Proteomes" id="UP000008212">
    <property type="component" value="Chromosome"/>
</dbReference>
<dbReference type="GO" id="GO:0009376">
    <property type="term" value="C:HslUV protease complex"/>
    <property type="evidence" value="ECO:0007669"/>
    <property type="project" value="UniProtKB-UniRule"/>
</dbReference>
<dbReference type="GO" id="GO:0005839">
    <property type="term" value="C:proteasome core complex"/>
    <property type="evidence" value="ECO:0007669"/>
    <property type="project" value="InterPro"/>
</dbReference>
<dbReference type="GO" id="GO:0046872">
    <property type="term" value="F:metal ion binding"/>
    <property type="evidence" value="ECO:0007669"/>
    <property type="project" value="UniProtKB-KW"/>
</dbReference>
<dbReference type="GO" id="GO:0004298">
    <property type="term" value="F:threonine-type endopeptidase activity"/>
    <property type="evidence" value="ECO:0007669"/>
    <property type="project" value="UniProtKB-KW"/>
</dbReference>
<dbReference type="GO" id="GO:0051603">
    <property type="term" value="P:proteolysis involved in protein catabolic process"/>
    <property type="evidence" value="ECO:0007669"/>
    <property type="project" value="InterPro"/>
</dbReference>
<dbReference type="CDD" id="cd01913">
    <property type="entry name" value="protease_HslV"/>
    <property type="match status" value="1"/>
</dbReference>
<dbReference type="FunFam" id="3.60.20.10:FF:000002">
    <property type="entry name" value="ATP-dependent protease subunit HslV"/>
    <property type="match status" value="1"/>
</dbReference>
<dbReference type="Gene3D" id="3.60.20.10">
    <property type="entry name" value="Glutamine Phosphoribosylpyrophosphate, subunit 1, domain 1"/>
    <property type="match status" value="1"/>
</dbReference>
<dbReference type="HAMAP" id="MF_00248">
    <property type="entry name" value="HslV"/>
    <property type="match status" value="1"/>
</dbReference>
<dbReference type="InterPro" id="IPR022281">
    <property type="entry name" value="ATP-dep_Prtase_HsIV_su"/>
</dbReference>
<dbReference type="InterPro" id="IPR029055">
    <property type="entry name" value="Ntn_hydrolases_N"/>
</dbReference>
<dbReference type="InterPro" id="IPR001353">
    <property type="entry name" value="Proteasome_sua/b"/>
</dbReference>
<dbReference type="InterPro" id="IPR023333">
    <property type="entry name" value="Proteasome_suB-type"/>
</dbReference>
<dbReference type="NCBIfam" id="TIGR03692">
    <property type="entry name" value="ATP_dep_HslV"/>
    <property type="match status" value="1"/>
</dbReference>
<dbReference type="NCBIfam" id="NF003964">
    <property type="entry name" value="PRK05456.1"/>
    <property type="match status" value="1"/>
</dbReference>
<dbReference type="PANTHER" id="PTHR32194:SF0">
    <property type="entry name" value="ATP-DEPENDENT PROTEASE SUBUNIT HSLV"/>
    <property type="match status" value="1"/>
</dbReference>
<dbReference type="PANTHER" id="PTHR32194">
    <property type="entry name" value="METALLOPROTEASE TLDD"/>
    <property type="match status" value="1"/>
</dbReference>
<dbReference type="Pfam" id="PF00227">
    <property type="entry name" value="Proteasome"/>
    <property type="match status" value="1"/>
</dbReference>
<dbReference type="PIRSF" id="PIRSF039093">
    <property type="entry name" value="HslV"/>
    <property type="match status" value="1"/>
</dbReference>
<dbReference type="SUPFAM" id="SSF56235">
    <property type="entry name" value="N-terminal nucleophile aminohydrolases (Ntn hydrolases)"/>
    <property type="match status" value="1"/>
</dbReference>
<dbReference type="PROSITE" id="PS51476">
    <property type="entry name" value="PROTEASOME_BETA_2"/>
    <property type="match status" value="1"/>
</dbReference>
<protein>
    <recommendedName>
        <fullName evidence="1">ATP-dependent protease subunit HslV</fullName>
        <ecNumber evidence="1">3.4.25.2</ecNumber>
    </recommendedName>
</protein>
<reference key="1">
    <citation type="journal article" date="2004" name="Proc. Natl. Acad. Sci. U.S.A.">
        <title>Comparison of the genome of the oral pathogen Treponema denticola with other spirochete genomes.</title>
        <authorList>
            <person name="Seshadri R."/>
            <person name="Myers G.S.A."/>
            <person name="Tettelin H."/>
            <person name="Eisen J.A."/>
            <person name="Heidelberg J.F."/>
            <person name="Dodson R.J."/>
            <person name="Davidsen T.M."/>
            <person name="DeBoy R.T."/>
            <person name="Fouts D.E."/>
            <person name="Haft D.H."/>
            <person name="Selengut J."/>
            <person name="Ren Q."/>
            <person name="Brinkac L.M."/>
            <person name="Madupu R."/>
            <person name="Kolonay J.F."/>
            <person name="Durkin S.A."/>
            <person name="Daugherty S.C."/>
            <person name="Shetty J."/>
            <person name="Shvartsbeyn A."/>
            <person name="Gebregeorgis E."/>
            <person name="Geer K."/>
            <person name="Tsegaye G."/>
            <person name="Malek J.A."/>
            <person name="Ayodeji B."/>
            <person name="Shatsman S."/>
            <person name="McLeod M.P."/>
            <person name="Smajs D."/>
            <person name="Howell J.K."/>
            <person name="Pal S."/>
            <person name="Amin A."/>
            <person name="Vashisth P."/>
            <person name="McNeill T.Z."/>
            <person name="Xiang Q."/>
            <person name="Sodergren E."/>
            <person name="Baca E."/>
            <person name="Weinstock G.M."/>
            <person name="Norris S.J."/>
            <person name="Fraser C.M."/>
            <person name="Paulsen I.T."/>
        </authorList>
    </citation>
    <scope>NUCLEOTIDE SEQUENCE [LARGE SCALE GENOMIC DNA]</scope>
    <source>
        <strain>ATCC 35405 / DSM 14222 / CIP 103919 / JCM 8153 / KCTC 15104</strain>
    </source>
</reference>
<proteinExistence type="inferred from homology"/>
<keyword id="KW-0021">Allosteric enzyme</keyword>
<keyword id="KW-0963">Cytoplasm</keyword>
<keyword id="KW-0378">Hydrolase</keyword>
<keyword id="KW-0479">Metal-binding</keyword>
<keyword id="KW-0645">Protease</keyword>
<keyword id="KW-1185">Reference proteome</keyword>
<keyword id="KW-0915">Sodium</keyword>
<keyword id="KW-0888">Threonine protease</keyword>
<accession>P61478</accession>